<evidence type="ECO:0000255" key="1">
    <source>
        <dbReference type="HAMAP-Rule" id="MF_01274"/>
    </source>
</evidence>
<protein>
    <recommendedName>
        <fullName evidence="1">Type III pantothenate kinase</fullName>
        <ecNumber evidence="1">2.7.1.33</ecNumber>
    </recommendedName>
    <alternativeName>
        <fullName evidence="1">PanK-III</fullName>
    </alternativeName>
    <alternativeName>
        <fullName evidence="1">Pantothenic acid kinase</fullName>
    </alternativeName>
</protein>
<name>COAX_HYPNA</name>
<dbReference type="EC" id="2.7.1.33" evidence="1"/>
<dbReference type="EMBL" id="CP000158">
    <property type="protein sequence ID" value="ABI77631.1"/>
    <property type="molecule type" value="Genomic_DNA"/>
</dbReference>
<dbReference type="RefSeq" id="WP_011646764.1">
    <property type="nucleotide sequence ID" value="NC_008358.1"/>
</dbReference>
<dbReference type="SMR" id="Q0C1C9"/>
<dbReference type="STRING" id="228405.HNE_1760"/>
<dbReference type="KEGG" id="hne:HNE_1760"/>
<dbReference type="eggNOG" id="COG1521">
    <property type="taxonomic scope" value="Bacteria"/>
</dbReference>
<dbReference type="HOGENOM" id="CLU_066627_1_0_5"/>
<dbReference type="UniPathway" id="UPA00241">
    <property type="reaction ID" value="UER00352"/>
</dbReference>
<dbReference type="Proteomes" id="UP000001959">
    <property type="component" value="Chromosome"/>
</dbReference>
<dbReference type="GO" id="GO:0005737">
    <property type="term" value="C:cytoplasm"/>
    <property type="evidence" value="ECO:0007669"/>
    <property type="project" value="UniProtKB-SubCell"/>
</dbReference>
<dbReference type="GO" id="GO:0005524">
    <property type="term" value="F:ATP binding"/>
    <property type="evidence" value="ECO:0007669"/>
    <property type="project" value="UniProtKB-UniRule"/>
</dbReference>
<dbReference type="GO" id="GO:0046872">
    <property type="term" value="F:metal ion binding"/>
    <property type="evidence" value="ECO:0007669"/>
    <property type="project" value="UniProtKB-KW"/>
</dbReference>
<dbReference type="GO" id="GO:0004594">
    <property type="term" value="F:pantothenate kinase activity"/>
    <property type="evidence" value="ECO:0007669"/>
    <property type="project" value="UniProtKB-UniRule"/>
</dbReference>
<dbReference type="GO" id="GO:0015937">
    <property type="term" value="P:coenzyme A biosynthetic process"/>
    <property type="evidence" value="ECO:0007669"/>
    <property type="project" value="UniProtKB-UniRule"/>
</dbReference>
<dbReference type="CDD" id="cd24015">
    <property type="entry name" value="ASKHA_NBD_PanK-III"/>
    <property type="match status" value="1"/>
</dbReference>
<dbReference type="Gene3D" id="3.30.420.40">
    <property type="match status" value="2"/>
</dbReference>
<dbReference type="HAMAP" id="MF_01274">
    <property type="entry name" value="Pantothen_kinase_3"/>
    <property type="match status" value="1"/>
</dbReference>
<dbReference type="InterPro" id="IPR043129">
    <property type="entry name" value="ATPase_NBD"/>
</dbReference>
<dbReference type="InterPro" id="IPR004619">
    <property type="entry name" value="Type_III_PanK"/>
</dbReference>
<dbReference type="NCBIfam" id="TIGR00671">
    <property type="entry name" value="baf"/>
    <property type="match status" value="1"/>
</dbReference>
<dbReference type="NCBIfam" id="NF009844">
    <property type="entry name" value="PRK13318.1-2"/>
    <property type="match status" value="1"/>
</dbReference>
<dbReference type="NCBIfam" id="NF009848">
    <property type="entry name" value="PRK13318.1-6"/>
    <property type="match status" value="1"/>
</dbReference>
<dbReference type="NCBIfam" id="NF009855">
    <property type="entry name" value="PRK13321.1"/>
    <property type="match status" value="1"/>
</dbReference>
<dbReference type="PANTHER" id="PTHR34265">
    <property type="entry name" value="TYPE III PANTOTHENATE KINASE"/>
    <property type="match status" value="1"/>
</dbReference>
<dbReference type="PANTHER" id="PTHR34265:SF1">
    <property type="entry name" value="TYPE III PANTOTHENATE KINASE"/>
    <property type="match status" value="1"/>
</dbReference>
<dbReference type="Pfam" id="PF03309">
    <property type="entry name" value="Pan_kinase"/>
    <property type="match status" value="1"/>
</dbReference>
<dbReference type="SUPFAM" id="SSF53067">
    <property type="entry name" value="Actin-like ATPase domain"/>
    <property type="match status" value="2"/>
</dbReference>
<comment type="function">
    <text evidence="1">Catalyzes the phosphorylation of pantothenate (Pan), the first step in CoA biosynthesis.</text>
</comment>
<comment type="catalytic activity">
    <reaction evidence="1">
        <text>(R)-pantothenate + ATP = (R)-4'-phosphopantothenate + ADP + H(+)</text>
        <dbReference type="Rhea" id="RHEA:16373"/>
        <dbReference type="ChEBI" id="CHEBI:10986"/>
        <dbReference type="ChEBI" id="CHEBI:15378"/>
        <dbReference type="ChEBI" id="CHEBI:29032"/>
        <dbReference type="ChEBI" id="CHEBI:30616"/>
        <dbReference type="ChEBI" id="CHEBI:456216"/>
        <dbReference type="EC" id="2.7.1.33"/>
    </reaction>
</comment>
<comment type="cofactor">
    <cofactor evidence="1">
        <name>NH4(+)</name>
        <dbReference type="ChEBI" id="CHEBI:28938"/>
    </cofactor>
    <cofactor evidence="1">
        <name>K(+)</name>
        <dbReference type="ChEBI" id="CHEBI:29103"/>
    </cofactor>
    <text evidence="1">A monovalent cation. Ammonium or potassium.</text>
</comment>
<comment type="pathway">
    <text evidence="1">Cofactor biosynthesis; coenzyme A biosynthesis; CoA from (R)-pantothenate: step 1/5.</text>
</comment>
<comment type="subunit">
    <text evidence="1">Homodimer.</text>
</comment>
<comment type="subcellular location">
    <subcellularLocation>
        <location evidence="1">Cytoplasm</location>
    </subcellularLocation>
</comment>
<comment type="similarity">
    <text evidence="1">Belongs to the type III pantothenate kinase family.</text>
</comment>
<sequence>MLLVIDVGNTNTVFALHDGEQWVNQWRSATDSTKTADDHASWLWRLADMQGVDLSRVQGCVVSSVVPHAQFNFRNLARRYLNVEPLFIGEPGLKTGMAVRVRHPEQVGADRIVSALGAHVAYPGDLIVIDSGTATTFDIVSADGAFEGGIISPGIYLSMRALHDAAAQLPRIAIQKPPQVIGKDTVSAMQSGVFIGYIELIDGLVRRIKAEWGRPMTVIATGGVASLFEGASETIDYYDQDILIRGLLEVWKRNR</sequence>
<accession>Q0C1C9</accession>
<reference key="1">
    <citation type="journal article" date="2006" name="J. Bacteriol.">
        <title>Comparative genomic evidence for a close relationship between the dimorphic prosthecate bacteria Hyphomonas neptunium and Caulobacter crescentus.</title>
        <authorList>
            <person name="Badger J.H."/>
            <person name="Hoover T.R."/>
            <person name="Brun Y.V."/>
            <person name="Weiner R.M."/>
            <person name="Laub M.T."/>
            <person name="Alexandre G."/>
            <person name="Mrazek J."/>
            <person name="Ren Q."/>
            <person name="Paulsen I.T."/>
            <person name="Nelson K.E."/>
            <person name="Khouri H.M."/>
            <person name="Radune D."/>
            <person name="Sosa J."/>
            <person name="Dodson R.J."/>
            <person name="Sullivan S.A."/>
            <person name="Rosovitz M.J."/>
            <person name="Madupu R."/>
            <person name="Brinkac L.M."/>
            <person name="Durkin A.S."/>
            <person name="Daugherty S.C."/>
            <person name="Kothari S.P."/>
            <person name="Giglio M.G."/>
            <person name="Zhou L."/>
            <person name="Haft D.H."/>
            <person name="Selengut J.D."/>
            <person name="Davidsen T.M."/>
            <person name="Yang Q."/>
            <person name="Zafar N."/>
            <person name="Ward N.L."/>
        </authorList>
    </citation>
    <scope>NUCLEOTIDE SEQUENCE [LARGE SCALE GENOMIC DNA]</scope>
    <source>
        <strain>ATCC 15444</strain>
    </source>
</reference>
<organism>
    <name type="scientific">Hyphomonas neptunium (strain ATCC 15444)</name>
    <dbReference type="NCBI Taxonomy" id="228405"/>
    <lineage>
        <taxon>Bacteria</taxon>
        <taxon>Pseudomonadati</taxon>
        <taxon>Pseudomonadota</taxon>
        <taxon>Alphaproteobacteria</taxon>
        <taxon>Hyphomonadales</taxon>
        <taxon>Hyphomonadaceae</taxon>
        <taxon>Hyphomonas</taxon>
    </lineage>
</organism>
<gene>
    <name evidence="1" type="primary">coaX</name>
    <name type="ordered locus">HNE_1760</name>
</gene>
<feature type="chain" id="PRO_0000267548" description="Type III pantothenate kinase">
    <location>
        <begin position="1"/>
        <end position="255"/>
    </location>
</feature>
<feature type="active site" description="Proton acceptor" evidence="1">
    <location>
        <position position="110"/>
    </location>
</feature>
<feature type="binding site" evidence="1">
    <location>
        <begin position="6"/>
        <end position="13"/>
    </location>
    <ligand>
        <name>ATP</name>
        <dbReference type="ChEBI" id="CHEBI:30616"/>
    </ligand>
</feature>
<feature type="binding site" evidence="1">
    <location>
        <begin position="108"/>
        <end position="111"/>
    </location>
    <ligand>
        <name>substrate</name>
    </ligand>
</feature>
<feature type="binding site" evidence="1">
    <location>
        <position position="130"/>
    </location>
    <ligand>
        <name>K(+)</name>
        <dbReference type="ChEBI" id="CHEBI:29103"/>
    </ligand>
</feature>
<feature type="binding site" evidence="1">
    <location>
        <position position="133"/>
    </location>
    <ligand>
        <name>ATP</name>
        <dbReference type="ChEBI" id="CHEBI:30616"/>
    </ligand>
</feature>
<feature type="binding site" evidence="1">
    <location>
        <position position="185"/>
    </location>
    <ligand>
        <name>substrate</name>
    </ligand>
</feature>
<proteinExistence type="inferred from homology"/>
<keyword id="KW-0067">ATP-binding</keyword>
<keyword id="KW-0173">Coenzyme A biosynthesis</keyword>
<keyword id="KW-0963">Cytoplasm</keyword>
<keyword id="KW-0418">Kinase</keyword>
<keyword id="KW-0479">Metal-binding</keyword>
<keyword id="KW-0547">Nucleotide-binding</keyword>
<keyword id="KW-0630">Potassium</keyword>
<keyword id="KW-1185">Reference proteome</keyword>
<keyword id="KW-0808">Transferase</keyword>